<organism>
    <name type="scientific">Rattus norvegicus</name>
    <name type="common">Rat</name>
    <dbReference type="NCBI Taxonomy" id="10116"/>
    <lineage>
        <taxon>Eukaryota</taxon>
        <taxon>Metazoa</taxon>
        <taxon>Chordata</taxon>
        <taxon>Craniata</taxon>
        <taxon>Vertebrata</taxon>
        <taxon>Euteleostomi</taxon>
        <taxon>Mammalia</taxon>
        <taxon>Eutheria</taxon>
        <taxon>Euarchontoglires</taxon>
        <taxon>Glires</taxon>
        <taxon>Rodentia</taxon>
        <taxon>Myomorpha</taxon>
        <taxon>Muroidea</taxon>
        <taxon>Muridae</taxon>
        <taxon>Murinae</taxon>
        <taxon>Rattus</taxon>
    </lineage>
</organism>
<sequence length="488" mass="55201">MNLAEICENAKKGREYALLGNYDSSMVYYQGVIQQIQRHCQSLRDPATKAKWQQVRQELLEEYEQVKSIVSTLESFKMDKPPDFPVSCRDEPFRDPAVWPPPVPAEHRAPPQIRRPNREVRPLRKDMGAGARGLVGRAHQISKSDKAASRDKDYRARGRDDKARKNMQDGASDGEIPKFDGAGYDKDLVEALERDIVSRNPSIHWDDIADLEEAKKLLREAVVLPMWMPDFFKGIRRPWKGVLMVGPPGTGKTMLAKAVATECGTTFFNVSSSTLTSKYRGESEKLVRLLFEMARFYAPTTIFIDEIDSICSRRGTSDEHEASRRVKSELLIQMDGVGGALENDDPSKMVMVLAATNFPWDIDEALRRRLEKRIYIPLPTAKGRAELLKISLREVELDPDIHLEDIAEKTEGYSGADITNICRDASLMAMRRRINGLSPEEIRALSKEELQMPVTRGDLELALKKIAKSVSAADLEKYEKWMVEFGSA</sequence>
<dbReference type="EC" id="5.6.1.1" evidence="3"/>
<dbReference type="EMBL" id="BC083673">
    <property type="protein sequence ID" value="AAH83673.1"/>
    <property type="molecule type" value="mRNA"/>
</dbReference>
<dbReference type="RefSeq" id="NP_001006957.1">
    <property type="nucleotide sequence ID" value="NM_001006956.1"/>
</dbReference>
<dbReference type="RefSeq" id="XP_003751164.1">
    <property type="nucleotide sequence ID" value="XM_003751116.4"/>
</dbReference>
<dbReference type="RefSeq" id="XP_006248878.1">
    <property type="nucleotide sequence ID" value="XM_006248816.5"/>
</dbReference>
<dbReference type="RefSeq" id="XP_006248879.1">
    <property type="nucleotide sequence ID" value="XM_006248817.5"/>
</dbReference>
<dbReference type="RefSeq" id="XP_006248886.1">
    <property type="nucleotide sequence ID" value="XM_006248824.3"/>
</dbReference>
<dbReference type="RefSeq" id="XP_017453776.1">
    <property type="nucleotide sequence ID" value="XM_017598287.1"/>
</dbReference>
<dbReference type="RefSeq" id="XP_017453970.1">
    <property type="nucleotide sequence ID" value="XM_017598481.3"/>
</dbReference>
<dbReference type="RefSeq" id="XP_017453971.1">
    <property type="nucleotide sequence ID" value="XM_017598482.3"/>
</dbReference>
<dbReference type="RefSeq" id="XP_017459908.1">
    <property type="nucleotide sequence ID" value="XM_017604419.1"/>
</dbReference>
<dbReference type="RefSeq" id="XP_017459909.1">
    <property type="nucleotide sequence ID" value="XM_017604420.1"/>
</dbReference>
<dbReference type="RefSeq" id="XP_017459910.1">
    <property type="nucleotide sequence ID" value="XM_017604421.1"/>
</dbReference>
<dbReference type="RefSeq" id="XP_017459911.1">
    <property type="nucleotide sequence ID" value="XM_017604422.1"/>
</dbReference>
<dbReference type="RefSeq" id="XP_017459912.1">
    <property type="nucleotide sequence ID" value="XM_017604423.1"/>
</dbReference>
<dbReference type="SMR" id="Q5XIK7"/>
<dbReference type="FunCoup" id="Q5XIK7">
    <property type="interactions" value="2461"/>
</dbReference>
<dbReference type="STRING" id="10116.ENSRNOP00000001219"/>
<dbReference type="iPTMnet" id="Q5XIK7"/>
<dbReference type="PhosphoSitePlus" id="Q5XIK7"/>
<dbReference type="PaxDb" id="10116-ENSRNOP00000001219"/>
<dbReference type="Ensembl" id="ENSRNOT00000077328.2">
    <property type="protein sequence ID" value="ENSRNOP00000068753.1"/>
    <property type="gene ID" value="ENSRNOG00000047618.3"/>
</dbReference>
<dbReference type="GeneID" id="288449"/>
<dbReference type="KEGG" id="rno:288449"/>
<dbReference type="UCSC" id="RGD:1359252">
    <property type="organism name" value="rat"/>
</dbReference>
<dbReference type="AGR" id="RGD:1359252"/>
<dbReference type="CTD" id="84056"/>
<dbReference type="RGD" id="1359252">
    <property type="gene designation" value="Katnal1"/>
</dbReference>
<dbReference type="eggNOG" id="KOG0738">
    <property type="taxonomic scope" value="Eukaryota"/>
</dbReference>
<dbReference type="GeneTree" id="ENSGT00940000156630"/>
<dbReference type="HOGENOM" id="CLU_000688_21_1_1"/>
<dbReference type="InParanoid" id="Q5XIK7"/>
<dbReference type="OMA" id="KGRWQQV"/>
<dbReference type="OrthoDB" id="5334845at2759"/>
<dbReference type="PhylomeDB" id="Q5XIK7"/>
<dbReference type="TreeFam" id="TF323170"/>
<dbReference type="PRO" id="PR:Q5XIK7"/>
<dbReference type="Proteomes" id="UP000002494">
    <property type="component" value="Chromosome 12"/>
</dbReference>
<dbReference type="Bgee" id="ENSRNOG00000000916">
    <property type="expression patterns" value="Expressed in cerebellum and 10 other cell types or tissues"/>
</dbReference>
<dbReference type="ExpressionAtlas" id="Q5XIK7">
    <property type="expression patterns" value="baseline"/>
</dbReference>
<dbReference type="GO" id="GO:0005813">
    <property type="term" value="C:centrosome"/>
    <property type="evidence" value="ECO:0007669"/>
    <property type="project" value="UniProtKB-UniRule"/>
</dbReference>
<dbReference type="GO" id="GO:0005737">
    <property type="term" value="C:cytoplasm"/>
    <property type="evidence" value="ECO:0000250"/>
    <property type="project" value="UniProtKB"/>
</dbReference>
<dbReference type="GO" id="GO:0008352">
    <property type="term" value="C:katanin complex"/>
    <property type="evidence" value="ECO:0000266"/>
    <property type="project" value="RGD"/>
</dbReference>
<dbReference type="GO" id="GO:0005874">
    <property type="term" value="C:microtubule"/>
    <property type="evidence" value="ECO:0000250"/>
    <property type="project" value="UniProtKB"/>
</dbReference>
<dbReference type="GO" id="GO:0015630">
    <property type="term" value="C:microtubule cytoskeleton"/>
    <property type="evidence" value="ECO:0000266"/>
    <property type="project" value="RGD"/>
</dbReference>
<dbReference type="GO" id="GO:0005819">
    <property type="term" value="C:spindle"/>
    <property type="evidence" value="ECO:0000250"/>
    <property type="project" value="UniProtKB"/>
</dbReference>
<dbReference type="GO" id="GO:0000922">
    <property type="term" value="C:spindle pole"/>
    <property type="evidence" value="ECO:0000250"/>
    <property type="project" value="UniProtKB"/>
</dbReference>
<dbReference type="GO" id="GO:0005524">
    <property type="term" value="F:ATP binding"/>
    <property type="evidence" value="ECO:0007669"/>
    <property type="project" value="UniProtKB-KW"/>
</dbReference>
<dbReference type="GO" id="GO:0016887">
    <property type="term" value="F:ATP hydrolysis activity"/>
    <property type="evidence" value="ECO:0000318"/>
    <property type="project" value="GO_Central"/>
</dbReference>
<dbReference type="GO" id="GO:0042802">
    <property type="term" value="F:identical protein binding"/>
    <property type="evidence" value="ECO:0000266"/>
    <property type="project" value="RGD"/>
</dbReference>
<dbReference type="GO" id="GO:0008017">
    <property type="term" value="F:microtubule binding"/>
    <property type="evidence" value="ECO:0007669"/>
    <property type="project" value="UniProtKB-UniRule"/>
</dbReference>
<dbReference type="GO" id="GO:0008568">
    <property type="term" value="F:microtubule severing ATPase activity"/>
    <property type="evidence" value="ECO:0000250"/>
    <property type="project" value="UniProtKB"/>
</dbReference>
<dbReference type="GO" id="GO:0051013">
    <property type="term" value="P:microtubule severing"/>
    <property type="evidence" value="ECO:0000250"/>
    <property type="project" value="UniProtKB"/>
</dbReference>
<dbReference type="GO" id="GO:0007283">
    <property type="term" value="P:spermatogenesis"/>
    <property type="evidence" value="ECO:0000266"/>
    <property type="project" value="RGD"/>
</dbReference>
<dbReference type="CDD" id="cd21748">
    <property type="entry name" value="Kp60-NTD"/>
    <property type="match status" value="1"/>
</dbReference>
<dbReference type="CDD" id="cd19522">
    <property type="entry name" value="RecA-like_KTNA1"/>
    <property type="match status" value="1"/>
</dbReference>
<dbReference type="FunFam" id="1.10.8.60:FF:000025">
    <property type="entry name" value="Katanin p60 ATPase-containing subunit A1"/>
    <property type="match status" value="1"/>
</dbReference>
<dbReference type="FunFam" id="1.20.58.80:FF:000003">
    <property type="entry name" value="Katanin p60 ATPase-containing subunit A1"/>
    <property type="match status" value="1"/>
</dbReference>
<dbReference type="FunFam" id="3.40.50.300:FF:000159">
    <property type="entry name" value="Katanin p60 ATPase-containing subunit A1"/>
    <property type="match status" value="1"/>
</dbReference>
<dbReference type="Gene3D" id="1.10.8.60">
    <property type="match status" value="1"/>
</dbReference>
<dbReference type="Gene3D" id="3.40.50.300">
    <property type="entry name" value="P-loop containing nucleotide triphosphate hydrolases"/>
    <property type="match status" value="1"/>
</dbReference>
<dbReference type="Gene3D" id="1.20.58.80">
    <property type="entry name" value="Phosphotransferase system, lactose/cellobiose-type IIA subunit"/>
    <property type="match status" value="1"/>
</dbReference>
<dbReference type="HAMAP" id="MF_03023">
    <property type="entry name" value="Katanin_p60_A1"/>
    <property type="match status" value="1"/>
</dbReference>
<dbReference type="HAMAP" id="MF_03024">
    <property type="entry name" value="Katanin_p60_AL1"/>
    <property type="match status" value="1"/>
</dbReference>
<dbReference type="InterPro" id="IPR003593">
    <property type="entry name" value="AAA+_ATPase"/>
</dbReference>
<dbReference type="InterPro" id="IPR041569">
    <property type="entry name" value="AAA_lid_3"/>
</dbReference>
<dbReference type="InterPro" id="IPR003959">
    <property type="entry name" value="ATPase_AAA_core"/>
</dbReference>
<dbReference type="InterPro" id="IPR003960">
    <property type="entry name" value="ATPase_AAA_CS"/>
</dbReference>
<dbReference type="InterPro" id="IPR028596">
    <property type="entry name" value="KATNA1"/>
</dbReference>
<dbReference type="InterPro" id="IPR048611">
    <property type="entry name" value="KATNA1_MIT"/>
</dbReference>
<dbReference type="InterPro" id="IPR028594">
    <property type="entry name" value="Katnal1_chordates"/>
</dbReference>
<dbReference type="InterPro" id="IPR048612">
    <property type="entry name" value="KTNA1_AAA_dom"/>
</dbReference>
<dbReference type="InterPro" id="IPR050304">
    <property type="entry name" value="MT-severing_AAA_ATPase"/>
</dbReference>
<dbReference type="InterPro" id="IPR027417">
    <property type="entry name" value="P-loop_NTPase"/>
</dbReference>
<dbReference type="InterPro" id="IPR015415">
    <property type="entry name" value="Spast_Vps4_C"/>
</dbReference>
<dbReference type="PANTHER" id="PTHR23074">
    <property type="entry name" value="AAA DOMAIN-CONTAINING"/>
    <property type="match status" value="1"/>
</dbReference>
<dbReference type="PANTHER" id="PTHR23074:SF65">
    <property type="entry name" value="KATANIN P60 ATPASE-CONTAINING SUBUNIT A-LIKE 1"/>
    <property type="match status" value="1"/>
</dbReference>
<dbReference type="Pfam" id="PF00004">
    <property type="entry name" value="AAA"/>
    <property type="match status" value="1"/>
</dbReference>
<dbReference type="Pfam" id="PF17862">
    <property type="entry name" value="AAA_lid_3"/>
    <property type="match status" value="1"/>
</dbReference>
<dbReference type="Pfam" id="PF21126">
    <property type="entry name" value="KATNA1_MIT"/>
    <property type="match status" value="1"/>
</dbReference>
<dbReference type="Pfam" id="PF09336">
    <property type="entry name" value="Vps4_C"/>
    <property type="match status" value="1"/>
</dbReference>
<dbReference type="SMART" id="SM00382">
    <property type="entry name" value="AAA"/>
    <property type="match status" value="1"/>
</dbReference>
<dbReference type="SUPFAM" id="SSF52540">
    <property type="entry name" value="P-loop containing nucleoside triphosphate hydrolases"/>
    <property type="match status" value="1"/>
</dbReference>
<dbReference type="PROSITE" id="PS00674">
    <property type="entry name" value="AAA"/>
    <property type="match status" value="1"/>
</dbReference>
<protein>
    <recommendedName>
        <fullName evidence="3">Katanin p60 ATPase-containing subunit A-like 1</fullName>
        <shortName evidence="3">Katanin p60 subunit A-like 1</shortName>
        <ecNumber evidence="3">5.6.1.1</ecNumber>
    </recommendedName>
    <alternativeName>
        <fullName evidence="3">p60 katanin-like 1</fullName>
    </alternativeName>
</protein>
<reference key="1">
    <citation type="journal article" date="2004" name="Genome Res.">
        <title>The status, quality, and expansion of the NIH full-length cDNA project: the Mammalian Gene Collection (MGC).</title>
        <authorList>
            <consortium name="The MGC Project Team"/>
        </authorList>
    </citation>
    <scope>NUCLEOTIDE SEQUENCE [LARGE SCALE MRNA]</scope>
    <source>
        <tissue>Testis</tissue>
    </source>
</reference>
<reference key="2">
    <citation type="journal article" date="2012" name="Nat. Commun.">
        <title>Quantitative maps of protein phosphorylation sites across 14 different rat organs and tissues.</title>
        <authorList>
            <person name="Lundby A."/>
            <person name="Secher A."/>
            <person name="Lage K."/>
            <person name="Nordsborg N.B."/>
            <person name="Dmytriyev A."/>
            <person name="Lundby C."/>
            <person name="Olsen J.V."/>
        </authorList>
    </citation>
    <scope>PHOSPHORYLATION [LARGE SCALE ANALYSIS] AT SER-172</scope>
    <scope>IDENTIFICATION BY MASS SPECTROMETRY [LARGE SCALE ANALYSIS]</scope>
</reference>
<keyword id="KW-0007">Acetylation</keyword>
<keyword id="KW-0067">ATP-binding</keyword>
<keyword id="KW-0963">Cytoplasm</keyword>
<keyword id="KW-0206">Cytoskeleton</keyword>
<keyword id="KW-0413">Isomerase</keyword>
<keyword id="KW-0493">Microtubule</keyword>
<keyword id="KW-0547">Nucleotide-binding</keyword>
<keyword id="KW-0597">Phosphoprotein</keyword>
<keyword id="KW-1185">Reference proteome</keyword>
<gene>
    <name type="primary">Katnal1</name>
</gene>
<comment type="function">
    <text evidence="1 2">Regulates microtubule dynamics in Sertoli cells, a process that is essential for spermiogenesis and male fertility. Severs microtubules in an ATP-dependent manner, promoting rapid reorganization of cellular microtubule arrays (By similarity). Has microtubule-severing activity in vitro (By similarity).</text>
</comment>
<comment type="catalytic activity">
    <reaction evidence="3">
        <text>n ATP + n H2O + a microtubule = n ADP + n phosphate + (n+1) alpha/beta tubulin heterodimers.</text>
        <dbReference type="EC" id="5.6.1.1"/>
    </reaction>
</comment>
<comment type="subunit">
    <text evidence="2">Interacts with KATNB1 and KATNBL1.</text>
</comment>
<comment type="subcellular location">
    <subcellularLocation>
        <location evidence="3">Cytoplasm</location>
        <location evidence="3">Cytoskeleton</location>
    </subcellularLocation>
    <subcellularLocation>
        <location evidence="2">Cytoplasm</location>
    </subcellularLocation>
    <subcellularLocation>
        <location evidence="2">Cytoplasm</location>
        <location evidence="2">Cytoskeleton</location>
        <location evidence="2">Spindle pole</location>
    </subcellularLocation>
    <subcellularLocation>
        <location evidence="2">Cytoplasm</location>
        <location evidence="2">Cytoskeleton</location>
        <location evidence="2">Spindle</location>
    </subcellularLocation>
    <text evidence="1 2">Colocalizes with microtubules throughout the basal and adluminal compartments of Sertoli cells (By similarity). Localizes within the cytoplasm, partially overlapping with microtubules, in interphase and to the mitotic spindle and spindle poles during mitosis (By similarity).</text>
</comment>
<comment type="similarity">
    <text evidence="3">Belongs to the AAA ATPase family. Katanin p60 subunit A1 subfamily. A-like 1 sub-subfamily.</text>
</comment>
<proteinExistence type="evidence at protein level"/>
<feature type="chain" id="PRO_0000084603" description="Katanin p60 ATPase-containing subunit A-like 1">
    <location>
        <begin position="1"/>
        <end position="488"/>
    </location>
</feature>
<feature type="region of interest" description="Disordered" evidence="4">
    <location>
        <begin position="128"/>
        <end position="179"/>
    </location>
</feature>
<feature type="compositionally biased region" description="Basic and acidic residues" evidence="4">
    <location>
        <begin position="142"/>
        <end position="167"/>
    </location>
</feature>
<feature type="binding site" evidence="3">
    <location>
        <begin position="246"/>
        <end position="253"/>
    </location>
    <ligand>
        <name>ATP</name>
        <dbReference type="ChEBI" id="CHEBI:30616"/>
    </ligand>
</feature>
<feature type="modified residue" description="N-acetylmethionine" evidence="2">
    <location>
        <position position="1"/>
    </location>
</feature>
<feature type="modified residue" description="Phosphoserine" evidence="5">
    <location>
        <position position="172"/>
    </location>
</feature>
<name>KATL1_RAT</name>
<evidence type="ECO:0000250" key="1">
    <source>
        <dbReference type="UniProtKB" id="Q8K0T4"/>
    </source>
</evidence>
<evidence type="ECO:0000250" key="2">
    <source>
        <dbReference type="UniProtKB" id="Q9BW62"/>
    </source>
</evidence>
<evidence type="ECO:0000255" key="3">
    <source>
        <dbReference type="HAMAP-Rule" id="MF_03024"/>
    </source>
</evidence>
<evidence type="ECO:0000256" key="4">
    <source>
        <dbReference type="SAM" id="MobiDB-lite"/>
    </source>
</evidence>
<evidence type="ECO:0007744" key="5">
    <source>
    </source>
</evidence>
<accession>Q5XIK7</accession>